<protein>
    <recommendedName>
        <fullName evidence="1">Ubiquinone/menaquinone biosynthesis C-methyltransferase UbiE</fullName>
        <ecNumber evidence="1">2.1.1.163</ecNumber>
        <ecNumber evidence="1">2.1.1.201</ecNumber>
    </recommendedName>
    <alternativeName>
        <fullName evidence="1">2-methoxy-6-polyprenyl-1,4-benzoquinol methylase</fullName>
    </alternativeName>
    <alternativeName>
        <fullName evidence="1">Demethylmenaquinone methyltransferase</fullName>
    </alternativeName>
</protein>
<sequence>MVDKSQETTHFGFQTVAKEQKADMVAHVFHSVASKYDVMNDLMSFGIHRLWKRFTIDCSGVRRGQTVLDLAGGTGDLTAKFSRLVGETGKVVLADINESMLKMGREKLRNIGVIGNVEYVQANAEALPFPDNTFDCITISFGLRNVTDKDKALRSMYRVLKPGGRLLVLEFSKPIIEPLSKAYDAYSFHVLPRIGSLVANDADSYRYLAESIRMHPDQDTLKTMMQDAGFESVDYYNLTAGVVALHRGYKF</sequence>
<evidence type="ECO:0000255" key="1">
    <source>
        <dbReference type="HAMAP-Rule" id="MF_01813"/>
    </source>
</evidence>
<organism>
    <name type="scientific">Escherichia coli O6:K15:H31 (strain 536 / UPEC)</name>
    <dbReference type="NCBI Taxonomy" id="362663"/>
    <lineage>
        <taxon>Bacteria</taxon>
        <taxon>Pseudomonadati</taxon>
        <taxon>Pseudomonadota</taxon>
        <taxon>Gammaproteobacteria</taxon>
        <taxon>Enterobacterales</taxon>
        <taxon>Enterobacteriaceae</taxon>
        <taxon>Escherichia</taxon>
    </lineage>
</organism>
<gene>
    <name evidence="1" type="primary">ubiE</name>
    <name type="ordered locus">ECP_4048</name>
</gene>
<comment type="function">
    <text evidence="1">Methyltransferase required for the conversion of demethylmenaquinol (DMKH2) to menaquinol (MKH2) and the conversion of 2-polyprenyl-6-methoxy-1,4-benzoquinol (DDMQH2) to 2-polyprenyl-3-methyl-6-methoxy-1,4-benzoquinol (DMQH2).</text>
</comment>
<comment type="catalytic activity">
    <reaction evidence="1">
        <text>a 2-demethylmenaquinol + S-adenosyl-L-methionine = a menaquinol + S-adenosyl-L-homocysteine + H(+)</text>
        <dbReference type="Rhea" id="RHEA:42640"/>
        <dbReference type="Rhea" id="RHEA-COMP:9539"/>
        <dbReference type="Rhea" id="RHEA-COMP:9563"/>
        <dbReference type="ChEBI" id="CHEBI:15378"/>
        <dbReference type="ChEBI" id="CHEBI:18151"/>
        <dbReference type="ChEBI" id="CHEBI:55437"/>
        <dbReference type="ChEBI" id="CHEBI:57856"/>
        <dbReference type="ChEBI" id="CHEBI:59789"/>
        <dbReference type="EC" id="2.1.1.163"/>
    </reaction>
</comment>
<comment type="catalytic activity">
    <reaction evidence="1">
        <text>a 2-methoxy-6-(all-trans-polyprenyl)benzene-1,4-diol + S-adenosyl-L-methionine = a 5-methoxy-2-methyl-3-(all-trans-polyprenyl)benzene-1,4-diol + S-adenosyl-L-homocysteine + H(+)</text>
        <dbReference type="Rhea" id="RHEA:28286"/>
        <dbReference type="Rhea" id="RHEA-COMP:10858"/>
        <dbReference type="Rhea" id="RHEA-COMP:10859"/>
        <dbReference type="ChEBI" id="CHEBI:15378"/>
        <dbReference type="ChEBI" id="CHEBI:57856"/>
        <dbReference type="ChEBI" id="CHEBI:59789"/>
        <dbReference type="ChEBI" id="CHEBI:84166"/>
        <dbReference type="ChEBI" id="CHEBI:84167"/>
        <dbReference type="EC" id="2.1.1.201"/>
    </reaction>
</comment>
<comment type="pathway">
    <text evidence="1">Quinol/quinone metabolism; menaquinone biosynthesis; menaquinol from 1,4-dihydroxy-2-naphthoate: step 2/2.</text>
</comment>
<comment type="pathway">
    <text evidence="1">Cofactor biosynthesis; ubiquinone biosynthesis.</text>
</comment>
<comment type="similarity">
    <text evidence="1">Belongs to the class I-like SAM-binding methyltransferase superfamily. MenG/UbiE family.</text>
</comment>
<feature type="chain" id="PRO_1000056245" description="Ubiquinone/menaquinone biosynthesis C-methyltransferase UbiE">
    <location>
        <begin position="1"/>
        <end position="251"/>
    </location>
</feature>
<feature type="binding site" evidence="1">
    <location>
        <position position="74"/>
    </location>
    <ligand>
        <name>S-adenosyl-L-methionine</name>
        <dbReference type="ChEBI" id="CHEBI:59789"/>
    </ligand>
</feature>
<feature type="binding site" evidence="1">
    <location>
        <position position="95"/>
    </location>
    <ligand>
        <name>S-adenosyl-L-methionine</name>
        <dbReference type="ChEBI" id="CHEBI:59789"/>
    </ligand>
</feature>
<feature type="binding site" evidence="1">
    <location>
        <begin position="123"/>
        <end position="124"/>
    </location>
    <ligand>
        <name>S-adenosyl-L-methionine</name>
        <dbReference type="ChEBI" id="CHEBI:59789"/>
    </ligand>
</feature>
<feature type="binding site" evidence="1">
    <location>
        <position position="140"/>
    </location>
    <ligand>
        <name>S-adenosyl-L-methionine</name>
        <dbReference type="ChEBI" id="CHEBI:59789"/>
    </ligand>
</feature>
<name>UBIE_ECOL5</name>
<keyword id="KW-0474">Menaquinone biosynthesis</keyword>
<keyword id="KW-0489">Methyltransferase</keyword>
<keyword id="KW-0949">S-adenosyl-L-methionine</keyword>
<keyword id="KW-0808">Transferase</keyword>
<keyword id="KW-0831">Ubiquinone biosynthesis</keyword>
<accession>Q0TAM1</accession>
<reference key="1">
    <citation type="journal article" date="2006" name="Mol. Microbiol.">
        <title>Role of pathogenicity island-associated integrases in the genome plasticity of uropathogenic Escherichia coli strain 536.</title>
        <authorList>
            <person name="Hochhut B."/>
            <person name="Wilde C."/>
            <person name="Balling G."/>
            <person name="Middendorf B."/>
            <person name="Dobrindt U."/>
            <person name="Brzuszkiewicz E."/>
            <person name="Gottschalk G."/>
            <person name="Carniel E."/>
            <person name="Hacker J."/>
        </authorList>
    </citation>
    <scope>NUCLEOTIDE SEQUENCE [LARGE SCALE GENOMIC DNA]</scope>
    <source>
        <strain>536 / UPEC</strain>
    </source>
</reference>
<proteinExistence type="inferred from homology"/>
<dbReference type="EC" id="2.1.1.163" evidence="1"/>
<dbReference type="EC" id="2.1.1.201" evidence="1"/>
<dbReference type="EMBL" id="CP000247">
    <property type="protein sequence ID" value="ABG72008.1"/>
    <property type="molecule type" value="Genomic_DNA"/>
</dbReference>
<dbReference type="RefSeq" id="WP_000227959.1">
    <property type="nucleotide sequence ID" value="NC_008253.1"/>
</dbReference>
<dbReference type="SMR" id="Q0TAM1"/>
<dbReference type="KEGG" id="ecp:ECP_4048"/>
<dbReference type="HOGENOM" id="CLU_037990_0_0_6"/>
<dbReference type="UniPathway" id="UPA00079">
    <property type="reaction ID" value="UER00169"/>
</dbReference>
<dbReference type="UniPathway" id="UPA00232"/>
<dbReference type="Proteomes" id="UP000009182">
    <property type="component" value="Chromosome"/>
</dbReference>
<dbReference type="GO" id="GO:0008425">
    <property type="term" value="F:2-methoxy-6-polyprenyl-1,4-benzoquinol methyltransferase activity"/>
    <property type="evidence" value="ECO:0007669"/>
    <property type="project" value="UniProtKB-UniRule"/>
</dbReference>
<dbReference type="GO" id="GO:0043770">
    <property type="term" value="F:demethylmenaquinone methyltransferase activity"/>
    <property type="evidence" value="ECO:0007669"/>
    <property type="project" value="UniProtKB-UniRule"/>
</dbReference>
<dbReference type="GO" id="GO:0009060">
    <property type="term" value="P:aerobic respiration"/>
    <property type="evidence" value="ECO:0007669"/>
    <property type="project" value="UniProtKB-UniRule"/>
</dbReference>
<dbReference type="GO" id="GO:0009234">
    <property type="term" value="P:menaquinone biosynthetic process"/>
    <property type="evidence" value="ECO:0007669"/>
    <property type="project" value="UniProtKB-UniRule"/>
</dbReference>
<dbReference type="GO" id="GO:0032259">
    <property type="term" value="P:methylation"/>
    <property type="evidence" value="ECO:0007669"/>
    <property type="project" value="UniProtKB-KW"/>
</dbReference>
<dbReference type="CDD" id="cd02440">
    <property type="entry name" value="AdoMet_MTases"/>
    <property type="match status" value="1"/>
</dbReference>
<dbReference type="FunFam" id="3.40.50.150:FF:000014">
    <property type="entry name" value="Ubiquinone/menaquinone biosynthesis C-methyltransferase UbiE"/>
    <property type="match status" value="1"/>
</dbReference>
<dbReference type="Gene3D" id="3.40.50.150">
    <property type="entry name" value="Vaccinia Virus protein VP39"/>
    <property type="match status" value="1"/>
</dbReference>
<dbReference type="HAMAP" id="MF_01813">
    <property type="entry name" value="MenG_UbiE_methyltr"/>
    <property type="match status" value="1"/>
</dbReference>
<dbReference type="InterPro" id="IPR029063">
    <property type="entry name" value="SAM-dependent_MTases_sf"/>
</dbReference>
<dbReference type="InterPro" id="IPR004033">
    <property type="entry name" value="UbiE/COQ5_MeTrFase"/>
</dbReference>
<dbReference type="InterPro" id="IPR023576">
    <property type="entry name" value="UbiE/COQ5_MeTrFase_CS"/>
</dbReference>
<dbReference type="NCBIfam" id="TIGR01934">
    <property type="entry name" value="MenG_MenH_UbiE"/>
    <property type="match status" value="1"/>
</dbReference>
<dbReference type="NCBIfam" id="NF001240">
    <property type="entry name" value="PRK00216.1-1"/>
    <property type="match status" value="1"/>
</dbReference>
<dbReference type="NCBIfam" id="NF001242">
    <property type="entry name" value="PRK00216.1-3"/>
    <property type="match status" value="1"/>
</dbReference>
<dbReference type="NCBIfam" id="NF001244">
    <property type="entry name" value="PRK00216.1-5"/>
    <property type="match status" value="1"/>
</dbReference>
<dbReference type="PANTHER" id="PTHR43591:SF24">
    <property type="entry name" value="2-METHOXY-6-POLYPRENYL-1,4-BENZOQUINOL METHYLASE, MITOCHONDRIAL"/>
    <property type="match status" value="1"/>
</dbReference>
<dbReference type="PANTHER" id="PTHR43591">
    <property type="entry name" value="METHYLTRANSFERASE"/>
    <property type="match status" value="1"/>
</dbReference>
<dbReference type="Pfam" id="PF01209">
    <property type="entry name" value="Ubie_methyltran"/>
    <property type="match status" value="1"/>
</dbReference>
<dbReference type="SUPFAM" id="SSF53335">
    <property type="entry name" value="S-adenosyl-L-methionine-dependent methyltransferases"/>
    <property type="match status" value="1"/>
</dbReference>
<dbReference type="PROSITE" id="PS51608">
    <property type="entry name" value="SAM_MT_UBIE"/>
    <property type="match status" value="1"/>
</dbReference>
<dbReference type="PROSITE" id="PS01183">
    <property type="entry name" value="UBIE_1"/>
    <property type="match status" value="1"/>
</dbReference>
<dbReference type="PROSITE" id="PS01184">
    <property type="entry name" value="UBIE_2"/>
    <property type="match status" value="1"/>
</dbReference>